<feature type="chain" id="PRO_1000147442" description="Bifunctional protein FolD">
    <location>
        <begin position="1"/>
        <end position="286"/>
    </location>
</feature>
<feature type="binding site" evidence="1">
    <location>
        <begin position="165"/>
        <end position="167"/>
    </location>
    <ligand>
        <name>NADP(+)</name>
        <dbReference type="ChEBI" id="CHEBI:58349"/>
    </ligand>
</feature>
<feature type="binding site" evidence="1">
    <location>
        <position position="190"/>
    </location>
    <ligand>
        <name>NADP(+)</name>
        <dbReference type="ChEBI" id="CHEBI:58349"/>
    </ligand>
</feature>
<feature type="binding site" evidence="1">
    <location>
        <position position="231"/>
    </location>
    <ligand>
        <name>NADP(+)</name>
        <dbReference type="ChEBI" id="CHEBI:58349"/>
    </ligand>
</feature>
<protein>
    <recommendedName>
        <fullName evidence="1">Bifunctional protein FolD</fullName>
    </recommendedName>
    <domain>
        <recommendedName>
            <fullName evidence="1">Methylenetetrahydrofolate dehydrogenase</fullName>
            <ecNumber evidence="1">1.5.1.5</ecNumber>
        </recommendedName>
    </domain>
    <domain>
        <recommendedName>
            <fullName evidence="1">Methenyltetrahydrofolate cyclohydrolase</fullName>
            <ecNumber evidence="1">3.5.4.9</ecNumber>
        </recommendedName>
    </domain>
</protein>
<gene>
    <name evidence="1" type="primary">folD</name>
    <name type="ordered locus">BcerKBAB4_4033</name>
</gene>
<accession>A9VGW3</accession>
<organism>
    <name type="scientific">Bacillus mycoides (strain KBAB4)</name>
    <name type="common">Bacillus weihenstephanensis</name>
    <dbReference type="NCBI Taxonomy" id="315730"/>
    <lineage>
        <taxon>Bacteria</taxon>
        <taxon>Bacillati</taxon>
        <taxon>Bacillota</taxon>
        <taxon>Bacilli</taxon>
        <taxon>Bacillales</taxon>
        <taxon>Bacillaceae</taxon>
        <taxon>Bacillus</taxon>
        <taxon>Bacillus cereus group</taxon>
    </lineage>
</organism>
<name>FOLD_BACMK</name>
<sequence>MVAVIIKGNEVAEKKRAQLKEKVVKLKEQGIVPGLAVILVGEDPASRSYVKGKEKGCEQVGIYSELIELPETITEERLLVEIDRLNGDDRINGILVQLPLPKHIEEKAIIERISPEKDVDGFHPISVGRMMTGQDTFLPCTPHGILELVKETNLDISGKHVVVIGRSNIVGKPVGQLFLNENATVTYCHSKTRNIKELSKLADILIVAVGRPKMVTADYIKEGAVVIDVGVNRLETGKLCGDVDFDNVLDVAGYITPVPKGVGPMTITMLLHNTVESAKRAGVVCQ</sequence>
<keyword id="KW-0028">Amino-acid biosynthesis</keyword>
<keyword id="KW-0368">Histidine biosynthesis</keyword>
<keyword id="KW-0378">Hydrolase</keyword>
<keyword id="KW-0486">Methionine biosynthesis</keyword>
<keyword id="KW-0511">Multifunctional enzyme</keyword>
<keyword id="KW-0521">NADP</keyword>
<keyword id="KW-0554">One-carbon metabolism</keyword>
<keyword id="KW-0560">Oxidoreductase</keyword>
<keyword id="KW-0658">Purine biosynthesis</keyword>
<reference key="1">
    <citation type="journal article" date="2008" name="Chem. Biol. Interact.">
        <title>Extending the Bacillus cereus group genomics to putative food-borne pathogens of different toxicity.</title>
        <authorList>
            <person name="Lapidus A."/>
            <person name="Goltsman E."/>
            <person name="Auger S."/>
            <person name="Galleron N."/>
            <person name="Segurens B."/>
            <person name="Dossat C."/>
            <person name="Land M.L."/>
            <person name="Broussolle V."/>
            <person name="Brillard J."/>
            <person name="Guinebretiere M.-H."/>
            <person name="Sanchis V."/>
            <person name="Nguen-the C."/>
            <person name="Lereclus D."/>
            <person name="Richardson P."/>
            <person name="Wincker P."/>
            <person name="Weissenbach J."/>
            <person name="Ehrlich S.D."/>
            <person name="Sorokin A."/>
        </authorList>
    </citation>
    <scope>NUCLEOTIDE SEQUENCE [LARGE SCALE GENOMIC DNA]</scope>
    <source>
        <strain>KBAB4</strain>
    </source>
</reference>
<comment type="function">
    <text evidence="1">Catalyzes the oxidation of 5,10-methylenetetrahydrofolate to 5,10-methenyltetrahydrofolate and then the hydrolysis of 5,10-methenyltetrahydrofolate to 10-formyltetrahydrofolate.</text>
</comment>
<comment type="catalytic activity">
    <reaction evidence="1">
        <text>(6R)-5,10-methylene-5,6,7,8-tetrahydrofolate + NADP(+) = (6R)-5,10-methenyltetrahydrofolate + NADPH</text>
        <dbReference type="Rhea" id="RHEA:22812"/>
        <dbReference type="ChEBI" id="CHEBI:15636"/>
        <dbReference type="ChEBI" id="CHEBI:57455"/>
        <dbReference type="ChEBI" id="CHEBI:57783"/>
        <dbReference type="ChEBI" id="CHEBI:58349"/>
        <dbReference type="EC" id="1.5.1.5"/>
    </reaction>
</comment>
<comment type="catalytic activity">
    <reaction evidence="1">
        <text>(6R)-5,10-methenyltetrahydrofolate + H2O = (6R)-10-formyltetrahydrofolate + H(+)</text>
        <dbReference type="Rhea" id="RHEA:23700"/>
        <dbReference type="ChEBI" id="CHEBI:15377"/>
        <dbReference type="ChEBI" id="CHEBI:15378"/>
        <dbReference type="ChEBI" id="CHEBI:57455"/>
        <dbReference type="ChEBI" id="CHEBI:195366"/>
        <dbReference type="EC" id="3.5.4.9"/>
    </reaction>
</comment>
<comment type="pathway">
    <text evidence="1">One-carbon metabolism; tetrahydrofolate interconversion.</text>
</comment>
<comment type="subunit">
    <text evidence="1">Homodimer.</text>
</comment>
<comment type="similarity">
    <text evidence="1">Belongs to the tetrahydrofolate dehydrogenase/cyclohydrolase family.</text>
</comment>
<proteinExistence type="inferred from homology"/>
<evidence type="ECO:0000255" key="1">
    <source>
        <dbReference type="HAMAP-Rule" id="MF_01576"/>
    </source>
</evidence>
<dbReference type="EC" id="1.5.1.5" evidence="1"/>
<dbReference type="EC" id="3.5.4.9" evidence="1"/>
<dbReference type="EMBL" id="CP000903">
    <property type="protein sequence ID" value="ABY45195.1"/>
    <property type="molecule type" value="Genomic_DNA"/>
</dbReference>
<dbReference type="RefSeq" id="WP_002143100.1">
    <property type="nucleotide sequence ID" value="NC_010184.1"/>
</dbReference>
<dbReference type="SMR" id="A9VGW3"/>
<dbReference type="KEGG" id="bwe:BcerKBAB4_4033"/>
<dbReference type="eggNOG" id="COG0190">
    <property type="taxonomic scope" value="Bacteria"/>
</dbReference>
<dbReference type="HOGENOM" id="CLU_034045_2_1_9"/>
<dbReference type="UniPathway" id="UPA00193"/>
<dbReference type="Proteomes" id="UP000002154">
    <property type="component" value="Chromosome"/>
</dbReference>
<dbReference type="GO" id="GO:0005829">
    <property type="term" value="C:cytosol"/>
    <property type="evidence" value="ECO:0007669"/>
    <property type="project" value="TreeGrafter"/>
</dbReference>
<dbReference type="GO" id="GO:0004477">
    <property type="term" value="F:methenyltetrahydrofolate cyclohydrolase activity"/>
    <property type="evidence" value="ECO:0007669"/>
    <property type="project" value="UniProtKB-UniRule"/>
</dbReference>
<dbReference type="GO" id="GO:0004488">
    <property type="term" value="F:methylenetetrahydrofolate dehydrogenase (NADP+) activity"/>
    <property type="evidence" value="ECO:0007669"/>
    <property type="project" value="UniProtKB-UniRule"/>
</dbReference>
<dbReference type="GO" id="GO:0000105">
    <property type="term" value="P:L-histidine biosynthetic process"/>
    <property type="evidence" value="ECO:0007669"/>
    <property type="project" value="UniProtKB-KW"/>
</dbReference>
<dbReference type="GO" id="GO:0009086">
    <property type="term" value="P:methionine biosynthetic process"/>
    <property type="evidence" value="ECO:0007669"/>
    <property type="project" value="UniProtKB-KW"/>
</dbReference>
<dbReference type="GO" id="GO:0006164">
    <property type="term" value="P:purine nucleotide biosynthetic process"/>
    <property type="evidence" value="ECO:0007669"/>
    <property type="project" value="UniProtKB-KW"/>
</dbReference>
<dbReference type="GO" id="GO:0035999">
    <property type="term" value="P:tetrahydrofolate interconversion"/>
    <property type="evidence" value="ECO:0007669"/>
    <property type="project" value="UniProtKB-UniRule"/>
</dbReference>
<dbReference type="CDD" id="cd01080">
    <property type="entry name" value="NAD_bind_m-THF_DH_Cyclohyd"/>
    <property type="match status" value="1"/>
</dbReference>
<dbReference type="FunFam" id="3.40.50.10860:FF:000001">
    <property type="entry name" value="Bifunctional protein FolD"/>
    <property type="match status" value="1"/>
</dbReference>
<dbReference type="FunFam" id="3.40.50.720:FF:000006">
    <property type="entry name" value="Bifunctional protein FolD"/>
    <property type="match status" value="1"/>
</dbReference>
<dbReference type="Gene3D" id="3.40.50.10860">
    <property type="entry name" value="Leucine Dehydrogenase, chain A, domain 1"/>
    <property type="match status" value="1"/>
</dbReference>
<dbReference type="Gene3D" id="3.40.50.720">
    <property type="entry name" value="NAD(P)-binding Rossmann-like Domain"/>
    <property type="match status" value="1"/>
</dbReference>
<dbReference type="HAMAP" id="MF_01576">
    <property type="entry name" value="THF_DHG_CYH"/>
    <property type="match status" value="1"/>
</dbReference>
<dbReference type="InterPro" id="IPR046346">
    <property type="entry name" value="Aminoacid_DH-like_N_sf"/>
</dbReference>
<dbReference type="InterPro" id="IPR036291">
    <property type="entry name" value="NAD(P)-bd_dom_sf"/>
</dbReference>
<dbReference type="InterPro" id="IPR000672">
    <property type="entry name" value="THF_DH/CycHdrlase"/>
</dbReference>
<dbReference type="InterPro" id="IPR020630">
    <property type="entry name" value="THF_DH/CycHdrlase_cat_dom"/>
</dbReference>
<dbReference type="InterPro" id="IPR020867">
    <property type="entry name" value="THF_DH/CycHdrlase_CS"/>
</dbReference>
<dbReference type="InterPro" id="IPR020631">
    <property type="entry name" value="THF_DH/CycHdrlase_NAD-bd_dom"/>
</dbReference>
<dbReference type="NCBIfam" id="NF008058">
    <property type="entry name" value="PRK10792.1"/>
    <property type="match status" value="1"/>
</dbReference>
<dbReference type="NCBIfam" id="NF010783">
    <property type="entry name" value="PRK14186.1"/>
    <property type="match status" value="1"/>
</dbReference>
<dbReference type="PANTHER" id="PTHR48099:SF5">
    <property type="entry name" value="C-1-TETRAHYDROFOLATE SYNTHASE, CYTOPLASMIC"/>
    <property type="match status" value="1"/>
</dbReference>
<dbReference type="PANTHER" id="PTHR48099">
    <property type="entry name" value="C-1-TETRAHYDROFOLATE SYNTHASE, CYTOPLASMIC-RELATED"/>
    <property type="match status" value="1"/>
</dbReference>
<dbReference type="Pfam" id="PF00763">
    <property type="entry name" value="THF_DHG_CYH"/>
    <property type="match status" value="1"/>
</dbReference>
<dbReference type="Pfam" id="PF02882">
    <property type="entry name" value="THF_DHG_CYH_C"/>
    <property type="match status" value="1"/>
</dbReference>
<dbReference type="PRINTS" id="PR00085">
    <property type="entry name" value="THFDHDRGNASE"/>
</dbReference>
<dbReference type="SUPFAM" id="SSF53223">
    <property type="entry name" value="Aminoacid dehydrogenase-like, N-terminal domain"/>
    <property type="match status" value="1"/>
</dbReference>
<dbReference type="SUPFAM" id="SSF51735">
    <property type="entry name" value="NAD(P)-binding Rossmann-fold domains"/>
    <property type="match status" value="1"/>
</dbReference>
<dbReference type="PROSITE" id="PS00767">
    <property type="entry name" value="THF_DHG_CYH_2"/>
    <property type="match status" value="1"/>
</dbReference>